<keyword id="KW-0175">Coiled coil</keyword>
<keyword id="KW-0479">Metal-binding</keyword>
<keyword id="KW-0539">Nucleus</keyword>
<keyword id="KW-1185">Reference proteome</keyword>
<keyword id="KW-0678">Repressor</keyword>
<keyword id="KW-0804">Transcription</keyword>
<keyword id="KW-0805">Transcription regulation</keyword>
<keyword id="KW-0862">Zinc</keyword>
<keyword id="KW-0863">Zinc-finger</keyword>
<feature type="chain" id="PRO_0000218303" description="Protein CBFA2T2">
    <location>
        <begin position="1"/>
        <end position="586"/>
    </location>
</feature>
<feature type="domain" description="TAFH" evidence="4">
    <location>
        <begin position="102"/>
        <end position="197"/>
    </location>
</feature>
<feature type="zinc finger region" description="MYND-type" evidence="3">
    <location>
        <begin position="497"/>
        <end position="533"/>
    </location>
</feature>
<feature type="region of interest" description="Disordered" evidence="5">
    <location>
        <begin position="1"/>
        <end position="95"/>
    </location>
</feature>
<feature type="region of interest" description="Disordered" evidence="5">
    <location>
        <begin position="204"/>
        <end position="242"/>
    </location>
</feature>
<feature type="region of interest" description="Disordered" evidence="5">
    <location>
        <begin position="387"/>
        <end position="417"/>
    </location>
</feature>
<feature type="region of interest" description="Disordered" evidence="5">
    <location>
        <begin position="561"/>
        <end position="586"/>
    </location>
</feature>
<feature type="coiled-coil region" evidence="2">
    <location>
        <begin position="429"/>
        <end position="481"/>
    </location>
</feature>
<feature type="compositionally biased region" description="Polar residues" evidence="5">
    <location>
        <begin position="56"/>
        <end position="68"/>
    </location>
</feature>
<feature type="compositionally biased region" description="Low complexity" evidence="5">
    <location>
        <begin position="77"/>
        <end position="90"/>
    </location>
</feature>
<feature type="compositionally biased region" description="Basic and acidic residues" evidence="5">
    <location>
        <begin position="228"/>
        <end position="237"/>
    </location>
</feature>
<feature type="compositionally biased region" description="Low complexity" evidence="5">
    <location>
        <begin position="399"/>
        <end position="409"/>
    </location>
</feature>
<feature type="compositionally biased region" description="Low complexity" evidence="5">
    <location>
        <begin position="566"/>
        <end position="586"/>
    </location>
</feature>
<feature type="binding site" evidence="3">
    <location>
        <position position="497"/>
    </location>
    <ligand>
        <name>Zn(2+)</name>
        <dbReference type="ChEBI" id="CHEBI:29105"/>
        <label>1</label>
    </ligand>
</feature>
<feature type="binding site" evidence="3">
    <location>
        <position position="500"/>
    </location>
    <ligand>
        <name>Zn(2+)</name>
        <dbReference type="ChEBI" id="CHEBI:29105"/>
        <label>1</label>
    </ligand>
</feature>
<feature type="binding site" evidence="3">
    <location>
        <position position="508"/>
    </location>
    <ligand>
        <name>Zn(2+)</name>
        <dbReference type="ChEBI" id="CHEBI:29105"/>
        <label>2</label>
    </ligand>
</feature>
<feature type="binding site" evidence="3">
    <location>
        <position position="511"/>
    </location>
    <ligand>
        <name>Zn(2+)</name>
        <dbReference type="ChEBI" id="CHEBI:29105"/>
        <label>2</label>
    </ligand>
</feature>
<feature type="binding site" evidence="3">
    <location>
        <position position="517"/>
    </location>
    <ligand>
        <name>Zn(2+)</name>
        <dbReference type="ChEBI" id="CHEBI:29105"/>
        <label>1</label>
    </ligand>
</feature>
<feature type="binding site" evidence="3">
    <location>
        <position position="521"/>
    </location>
    <ligand>
        <name>Zn(2+)</name>
        <dbReference type="ChEBI" id="CHEBI:29105"/>
        <label>1</label>
    </ligand>
</feature>
<feature type="binding site" evidence="3">
    <location>
        <position position="529"/>
    </location>
    <ligand>
        <name>Zn(2+)</name>
        <dbReference type="ChEBI" id="CHEBI:29105"/>
        <label>2</label>
    </ligand>
</feature>
<feature type="binding site" evidence="3">
    <location>
        <position position="533"/>
    </location>
    <ligand>
        <name>Zn(2+)</name>
        <dbReference type="ChEBI" id="CHEBI:29105"/>
        <label>2</label>
    </ligand>
</feature>
<gene>
    <name type="primary">cbfa2t2</name>
    <name type="synonym">mtgr1</name>
</gene>
<protein>
    <recommendedName>
        <fullName>Protein CBFA2T2</fullName>
    </recommendedName>
    <alternativeName>
        <fullName>MTG8-like protein</fullName>
    </alternativeName>
    <alternativeName>
        <fullName>MTG8-related protein 1</fullName>
    </alternativeName>
</protein>
<organism>
    <name type="scientific">Xenopus laevis</name>
    <name type="common">African clawed frog</name>
    <dbReference type="NCBI Taxonomy" id="8355"/>
    <lineage>
        <taxon>Eukaryota</taxon>
        <taxon>Metazoa</taxon>
        <taxon>Chordata</taxon>
        <taxon>Craniata</taxon>
        <taxon>Vertebrata</taxon>
        <taxon>Euteleostomi</taxon>
        <taxon>Amphibia</taxon>
        <taxon>Batrachia</taxon>
        <taxon>Anura</taxon>
        <taxon>Pipoidea</taxon>
        <taxon>Pipidae</taxon>
        <taxon>Xenopodinae</taxon>
        <taxon>Xenopus</taxon>
        <taxon>Xenopus</taxon>
    </lineage>
</organism>
<reference key="1">
    <citation type="submission" date="2001-03" db="EMBL/GenBank/DDBJ databases">
        <title>A novel Xenopus gene homologous to human MTGR1.</title>
        <authorList>
            <person name="Cao Y."/>
            <person name="Zhao H."/>
            <person name="Grunz H."/>
        </authorList>
    </citation>
    <scope>NUCLEOTIDE SEQUENCE [MRNA]</scope>
</reference>
<accession>Q9IAB2</accession>
<evidence type="ECO:0000250" key="1">
    <source>
        <dbReference type="UniProtKB" id="O70374"/>
    </source>
</evidence>
<evidence type="ECO:0000255" key="2"/>
<evidence type="ECO:0000255" key="3">
    <source>
        <dbReference type="PROSITE-ProRule" id="PRU00134"/>
    </source>
</evidence>
<evidence type="ECO:0000255" key="4">
    <source>
        <dbReference type="PROSITE-ProRule" id="PRU00440"/>
    </source>
</evidence>
<evidence type="ECO:0000256" key="5">
    <source>
        <dbReference type="SAM" id="MobiDB-lite"/>
    </source>
</evidence>
<evidence type="ECO:0000305" key="6"/>
<dbReference type="EMBL" id="AF212198">
    <property type="protein sequence ID" value="AAF63193.2"/>
    <property type="molecule type" value="mRNA"/>
</dbReference>
<dbReference type="SMR" id="Q9IAB2"/>
<dbReference type="AGR" id="Xenbase:XB-GENE-950038"/>
<dbReference type="Xenbase" id="XB-GENE-950038">
    <property type="gene designation" value="cbfa2t2.L"/>
</dbReference>
<dbReference type="Proteomes" id="UP000186698">
    <property type="component" value="Unplaced"/>
</dbReference>
<dbReference type="GO" id="GO:0005634">
    <property type="term" value="C:nucleus"/>
    <property type="evidence" value="ECO:0000318"/>
    <property type="project" value="GO_Central"/>
</dbReference>
<dbReference type="GO" id="GO:0003714">
    <property type="term" value="F:transcription corepressor activity"/>
    <property type="evidence" value="ECO:0000318"/>
    <property type="project" value="GO_Central"/>
</dbReference>
<dbReference type="GO" id="GO:0008270">
    <property type="term" value="F:zinc ion binding"/>
    <property type="evidence" value="ECO:0007669"/>
    <property type="project" value="UniProtKB-KW"/>
</dbReference>
<dbReference type="GO" id="GO:0006351">
    <property type="term" value="P:DNA-templated transcription"/>
    <property type="evidence" value="ECO:0007669"/>
    <property type="project" value="InterPro"/>
</dbReference>
<dbReference type="GO" id="GO:0045892">
    <property type="term" value="P:negative regulation of DNA-templated transcription"/>
    <property type="evidence" value="ECO:0000270"/>
    <property type="project" value="UniProtKB"/>
</dbReference>
<dbReference type="GO" id="GO:0050768">
    <property type="term" value="P:negative regulation of neurogenesis"/>
    <property type="evidence" value="ECO:0000270"/>
    <property type="project" value="UniProtKB"/>
</dbReference>
<dbReference type="GO" id="GO:0010977">
    <property type="term" value="P:negative regulation of neuron projection development"/>
    <property type="evidence" value="ECO:0000250"/>
    <property type="project" value="UniProtKB"/>
</dbReference>
<dbReference type="FunFam" id="6.10.140.2220:FF:000001">
    <property type="entry name" value="CBFA2/RUNX1 translocation partner 3"/>
    <property type="match status" value="1"/>
</dbReference>
<dbReference type="FunFam" id="1.20.120.1110:FF:000001">
    <property type="entry name" value="RUNX1 translocation partner 1"/>
    <property type="match status" value="1"/>
</dbReference>
<dbReference type="Gene3D" id="6.10.140.2220">
    <property type="match status" value="1"/>
</dbReference>
<dbReference type="Gene3D" id="6.10.250.230">
    <property type="match status" value="1"/>
</dbReference>
<dbReference type="Gene3D" id="1.20.120.1110">
    <property type="entry name" value="TAFH/NHR1 domain"/>
    <property type="match status" value="1"/>
</dbReference>
<dbReference type="InterPro" id="IPR013289">
    <property type="entry name" value="CBFA2T1/2/3"/>
</dbReference>
<dbReference type="InterPro" id="IPR013291">
    <property type="entry name" value="MTGR1"/>
</dbReference>
<dbReference type="InterPro" id="IPR014896">
    <property type="entry name" value="NHR2"/>
</dbReference>
<dbReference type="InterPro" id="IPR037249">
    <property type="entry name" value="TAFH/NHR1_dom_sf"/>
</dbReference>
<dbReference type="InterPro" id="IPR003894">
    <property type="entry name" value="TAFH_NHR1"/>
</dbReference>
<dbReference type="InterPro" id="IPR002893">
    <property type="entry name" value="Znf_MYND"/>
</dbReference>
<dbReference type="PANTHER" id="PTHR10379">
    <property type="entry name" value="MTG8 ETO EIGHT TWENTY ONE PROTEIN"/>
    <property type="match status" value="1"/>
</dbReference>
<dbReference type="PANTHER" id="PTHR10379:SF13">
    <property type="entry name" value="PROTEIN CBFA2T2"/>
    <property type="match status" value="1"/>
</dbReference>
<dbReference type="Pfam" id="PF08788">
    <property type="entry name" value="NHR2"/>
    <property type="match status" value="1"/>
</dbReference>
<dbReference type="Pfam" id="PF07531">
    <property type="entry name" value="TAFH"/>
    <property type="match status" value="1"/>
</dbReference>
<dbReference type="Pfam" id="PF01753">
    <property type="entry name" value="zf-MYND"/>
    <property type="match status" value="1"/>
</dbReference>
<dbReference type="PRINTS" id="PR01875">
    <property type="entry name" value="ETOFAMILY"/>
</dbReference>
<dbReference type="PRINTS" id="PR01877">
    <property type="entry name" value="MTGR1PROTEIN"/>
</dbReference>
<dbReference type="SMART" id="SM00549">
    <property type="entry name" value="TAFH"/>
    <property type="match status" value="1"/>
</dbReference>
<dbReference type="SUPFAM" id="SSF144232">
    <property type="entry name" value="HIT/MYND zinc finger-like"/>
    <property type="match status" value="1"/>
</dbReference>
<dbReference type="SUPFAM" id="SSF158553">
    <property type="entry name" value="TAFH domain-like"/>
    <property type="match status" value="1"/>
</dbReference>
<dbReference type="PROSITE" id="PS51119">
    <property type="entry name" value="TAFH"/>
    <property type="match status" value="1"/>
</dbReference>
<dbReference type="PROSITE" id="PS01360">
    <property type="entry name" value="ZF_MYND_1"/>
    <property type="match status" value="1"/>
</dbReference>
<dbReference type="PROSITE" id="PS50865">
    <property type="entry name" value="ZF_MYND_2"/>
    <property type="match status" value="1"/>
</dbReference>
<name>MTG8R_XENLA</name>
<sequence>MVGIPGPYQFTGDKRVPAMPGSPMEVKIHSRSSPPIMAPLPPVNPGGLRPVGFPPSSHSNGINHSPPTLNGAPSPPQRSSNGPSSSSSSSLANQQLPATCGVRQLSKLKRFLTTLQQFGNDISPEIGEKVRTLVLALVNSTVTIEEFHCKLQEATNFPLRPFVIPFLKANLPLLQRELLHCARAGKQTPSQYLAQHEHILLNTSTSSPADSSELLMEMNGNGKRHSPDRREEERETAPAEPPVKRVCTISPAPRHSPALSLPLVNSTSHFHPTPPPLQHYSLEDIPSSQLYRDHLNKIGEHRDVRDRHHSSGVNGNLNNGYQEELVDHRLTEREWAEEWKHLDHALNCIMEMVEKTRRSMAVLRRCQEVDRDELNYWKRRFNESNEIRKGSEHPSRQHSPSSTDSGASDSVRDFGSRTGAGYVTDEIWRKAEEAVNEVKRQAMSEVQKAVSEAEQKAFEMIASERARMEQTIVDAKRRAAEDAVLVVNEQEESTESCWNCGRKASETCSGCNIARYCGSFCQHKDWEKHHRICGQSMHTQAKPLTPSRSLIPKASDPVLLSPTLERSSSATSRSSTPASVTAVDGL</sequence>
<proteinExistence type="evidence at transcript level"/>
<comment type="function">
    <text evidence="1">May act as a transcriptional corepressor.</text>
</comment>
<comment type="subcellular location">
    <subcellularLocation>
        <location evidence="4">Nucleus</location>
    </subcellularLocation>
</comment>
<comment type="caution">
    <text evidence="6">It is uncertain whether Met-1 or Met-19 is the initiator.</text>
</comment>